<reference key="1">
    <citation type="journal article" date="2006" name="Environ. Microbiol.">
        <title>Whole genome analysis of the marine Bacteroidetes'Gramella forsetii' reveals adaptations to degradation of polymeric organic matter.</title>
        <authorList>
            <person name="Bauer M."/>
            <person name="Kube M."/>
            <person name="Teeling H."/>
            <person name="Richter M."/>
            <person name="Lombardot T."/>
            <person name="Allers E."/>
            <person name="Wuerdemann C.A."/>
            <person name="Quast C."/>
            <person name="Kuhl H."/>
            <person name="Knaust F."/>
            <person name="Woebken D."/>
            <person name="Bischof K."/>
            <person name="Mussmann M."/>
            <person name="Choudhuri J.V."/>
            <person name="Meyer F."/>
            <person name="Reinhardt R."/>
            <person name="Amann R.I."/>
            <person name="Gloeckner F.O."/>
        </authorList>
    </citation>
    <scope>NUCLEOTIDE SEQUENCE [LARGE SCALE GENOMIC DNA]</scope>
    <source>
        <strain>DSM 17595 / CGMCC 1.15422 / KT0803</strain>
    </source>
</reference>
<sequence>MSNTRVHNPSASILSDFKEITKMRLAISVVFSSVAGYFLGADTIDFVTVTLLAIGGYLMVGASNAYNQIIERNLDALMDRTKNRPLPAGRMSVPVAFTIASAFTVLGLVVLYVINPKTAMFGAISIFLYVSIYTPLKTKTPLSVFVGAFPGAIPFMLGWVAASGSFSIEPGTLFMIQFFWQFPHFWAIGWWLFDDYKKGGFFMLPTGKRDRGTAIQIILYTCWTILVSLIPVFGVTGKLMLTPVSGIIIFLLGLGMLYYAIRLFKEKTAEAAKKLMFASVSYITLLQIVYVLDKFIREWI</sequence>
<dbReference type="EC" id="2.5.1.141" evidence="1"/>
<dbReference type="EMBL" id="CU207366">
    <property type="protein sequence ID" value="CAL65176.1"/>
    <property type="molecule type" value="Genomic_DNA"/>
</dbReference>
<dbReference type="RefSeq" id="WP_011708114.1">
    <property type="nucleotide sequence ID" value="NC_008571.1"/>
</dbReference>
<dbReference type="SMR" id="A0LXT1"/>
<dbReference type="STRING" id="411154.GFO_0188"/>
<dbReference type="KEGG" id="gfo:GFO_0188"/>
<dbReference type="eggNOG" id="COG0109">
    <property type="taxonomic scope" value="Bacteria"/>
</dbReference>
<dbReference type="HOGENOM" id="CLU_029631_3_2_10"/>
<dbReference type="OrthoDB" id="9814417at2"/>
<dbReference type="UniPathway" id="UPA00834">
    <property type="reaction ID" value="UER00712"/>
</dbReference>
<dbReference type="Proteomes" id="UP000000755">
    <property type="component" value="Chromosome"/>
</dbReference>
<dbReference type="GO" id="GO:0005886">
    <property type="term" value="C:plasma membrane"/>
    <property type="evidence" value="ECO:0007669"/>
    <property type="project" value="UniProtKB-SubCell"/>
</dbReference>
<dbReference type="GO" id="GO:0008495">
    <property type="term" value="F:protoheme IX farnesyltransferase activity"/>
    <property type="evidence" value="ECO:0007669"/>
    <property type="project" value="UniProtKB-UniRule"/>
</dbReference>
<dbReference type="GO" id="GO:0006784">
    <property type="term" value="P:heme A biosynthetic process"/>
    <property type="evidence" value="ECO:0007669"/>
    <property type="project" value="TreeGrafter"/>
</dbReference>
<dbReference type="GO" id="GO:0048034">
    <property type="term" value="P:heme O biosynthetic process"/>
    <property type="evidence" value="ECO:0007669"/>
    <property type="project" value="UniProtKB-UniRule"/>
</dbReference>
<dbReference type="CDD" id="cd13957">
    <property type="entry name" value="PT_UbiA_Cox10"/>
    <property type="match status" value="1"/>
</dbReference>
<dbReference type="Gene3D" id="1.10.357.140">
    <property type="entry name" value="UbiA prenyltransferase"/>
    <property type="match status" value="1"/>
</dbReference>
<dbReference type="HAMAP" id="MF_00154">
    <property type="entry name" value="CyoE_CtaB"/>
    <property type="match status" value="1"/>
</dbReference>
<dbReference type="InterPro" id="IPR006369">
    <property type="entry name" value="Protohaem_IX_farnesylTrfase"/>
</dbReference>
<dbReference type="InterPro" id="IPR000537">
    <property type="entry name" value="UbiA_prenyltransferase"/>
</dbReference>
<dbReference type="InterPro" id="IPR030470">
    <property type="entry name" value="UbiA_prenylTrfase_CS"/>
</dbReference>
<dbReference type="InterPro" id="IPR044878">
    <property type="entry name" value="UbiA_sf"/>
</dbReference>
<dbReference type="NCBIfam" id="TIGR01473">
    <property type="entry name" value="cyoE_ctaB"/>
    <property type="match status" value="1"/>
</dbReference>
<dbReference type="PANTHER" id="PTHR43448">
    <property type="entry name" value="PROTOHEME IX FARNESYLTRANSFERASE, MITOCHONDRIAL"/>
    <property type="match status" value="1"/>
</dbReference>
<dbReference type="PANTHER" id="PTHR43448:SF2">
    <property type="entry name" value="PROTOHEME IX FARNESYLTRANSFERASE, MITOCHONDRIAL"/>
    <property type="match status" value="1"/>
</dbReference>
<dbReference type="Pfam" id="PF01040">
    <property type="entry name" value="UbiA"/>
    <property type="match status" value="1"/>
</dbReference>
<dbReference type="PROSITE" id="PS00943">
    <property type="entry name" value="UBIA"/>
    <property type="match status" value="1"/>
</dbReference>
<feature type="chain" id="PRO_0000327060" description="Protoheme IX farnesyltransferase">
    <location>
        <begin position="1"/>
        <end position="300"/>
    </location>
</feature>
<feature type="transmembrane region" description="Helical" evidence="1">
    <location>
        <begin position="20"/>
        <end position="40"/>
    </location>
</feature>
<feature type="transmembrane region" description="Helical" evidence="1">
    <location>
        <begin position="43"/>
        <end position="63"/>
    </location>
</feature>
<feature type="transmembrane region" description="Helical" evidence="1">
    <location>
        <begin position="94"/>
        <end position="114"/>
    </location>
</feature>
<feature type="transmembrane region" description="Helical" evidence="1">
    <location>
        <begin position="116"/>
        <end position="136"/>
    </location>
</feature>
<feature type="transmembrane region" description="Helical" evidence="1">
    <location>
        <begin position="142"/>
        <end position="162"/>
    </location>
</feature>
<feature type="transmembrane region" description="Helical" evidence="1">
    <location>
        <begin position="173"/>
        <end position="193"/>
    </location>
</feature>
<feature type="transmembrane region" description="Helical" evidence="1">
    <location>
        <begin position="215"/>
        <end position="235"/>
    </location>
</feature>
<feature type="transmembrane region" description="Helical" evidence="1">
    <location>
        <begin position="241"/>
        <end position="261"/>
    </location>
</feature>
<feature type="transmembrane region" description="Helical" evidence="1">
    <location>
        <begin position="276"/>
        <end position="296"/>
    </location>
</feature>
<proteinExistence type="inferred from homology"/>
<name>COXX_CHRFK</name>
<keyword id="KW-1003">Cell membrane</keyword>
<keyword id="KW-0350">Heme biosynthesis</keyword>
<keyword id="KW-0472">Membrane</keyword>
<keyword id="KW-0808">Transferase</keyword>
<keyword id="KW-0812">Transmembrane</keyword>
<keyword id="KW-1133">Transmembrane helix</keyword>
<gene>
    <name evidence="1" type="primary">ctaB</name>
    <name type="ordered locus">GFO_0188</name>
</gene>
<organism>
    <name type="scientific">Christiangramia forsetii (strain DSM 17595 / CGMCC 1.15422 / KT0803)</name>
    <name type="common">Gramella forsetii</name>
    <dbReference type="NCBI Taxonomy" id="411154"/>
    <lineage>
        <taxon>Bacteria</taxon>
        <taxon>Pseudomonadati</taxon>
        <taxon>Bacteroidota</taxon>
        <taxon>Flavobacteriia</taxon>
        <taxon>Flavobacteriales</taxon>
        <taxon>Flavobacteriaceae</taxon>
        <taxon>Christiangramia</taxon>
    </lineage>
</organism>
<comment type="function">
    <text evidence="1">Converts heme B (protoheme IX) to heme O by substitution of the vinyl group on carbon 2 of heme B porphyrin ring with a hydroxyethyl farnesyl side group.</text>
</comment>
<comment type="catalytic activity">
    <reaction evidence="1">
        <text>heme b + (2E,6E)-farnesyl diphosphate + H2O = Fe(II)-heme o + diphosphate</text>
        <dbReference type="Rhea" id="RHEA:28070"/>
        <dbReference type="ChEBI" id="CHEBI:15377"/>
        <dbReference type="ChEBI" id="CHEBI:33019"/>
        <dbReference type="ChEBI" id="CHEBI:60344"/>
        <dbReference type="ChEBI" id="CHEBI:60530"/>
        <dbReference type="ChEBI" id="CHEBI:175763"/>
        <dbReference type="EC" id="2.5.1.141"/>
    </reaction>
</comment>
<comment type="pathway">
    <text evidence="1">Porphyrin-containing compound metabolism; heme O biosynthesis; heme O from protoheme: step 1/1.</text>
</comment>
<comment type="subcellular location">
    <subcellularLocation>
        <location evidence="1">Cell membrane</location>
        <topology evidence="1">Multi-pass membrane protein</topology>
    </subcellularLocation>
</comment>
<comment type="miscellaneous">
    <text evidence="1">Carbon 2 of the heme B porphyrin ring is defined according to the Fischer nomenclature.</text>
</comment>
<comment type="similarity">
    <text evidence="1">Belongs to the UbiA prenyltransferase family. Protoheme IX farnesyltransferase subfamily.</text>
</comment>
<protein>
    <recommendedName>
        <fullName evidence="1">Protoheme IX farnesyltransferase</fullName>
        <ecNumber evidence="1">2.5.1.141</ecNumber>
    </recommendedName>
    <alternativeName>
        <fullName evidence="1">Heme B farnesyltransferase</fullName>
    </alternativeName>
    <alternativeName>
        <fullName evidence="1">Heme O synthase</fullName>
    </alternativeName>
</protein>
<accession>A0LXT1</accession>
<evidence type="ECO:0000255" key="1">
    <source>
        <dbReference type="HAMAP-Rule" id="MF_00154"/>
    </source>
</evidence>